<organism>
    <name type="scientific">Rickettsia conorii (strain ATCC VR-613 / Malish 7)</name>
    <dbReference type="NCBI Taxonomy" id="272944"/>
    <lineage>
        <taxon>Bacteria</taxon>
        <taxon>Pseudomonadati</taxon>
        <taxon>Pseudomonadota</taxon>
        <taxon>Alphaproteobacteria</taxon>
        <taxon>Rickettsiales</taxon>
        <taxon>Rickettsiaceae</taxon>
        <taxon>Rickettsieae</taxon>
        <taxon>Rickettsia</taxon>
        <taxon>spotted fever group</taxon>
    </lineage>
</organism>
<feature type="chain" id="PRO_0000176571" description="Transcription antitermination protein NusB">
    <location>
        <begin position="1"/>
        <end position="156"/>
    </location>
</feature>
<name>NUSB_RICCN</name>
<keyword id="KW-0694">RNA-binding</keyword>
<keyword id="KW-0804">Transcription</keyword>
<keyword id="KW-0889">Transcription antitermination</keyword>
<keyword id="KW-0805">Transcription regulation</keyword>
<accession>Q92J65</accession>
<evidence type="ECO:0000255" key="1">
    <source>
        <dbReference type="HAMAP-Rule" id="MF_00073"/>
    </source>
</evidence>
<reference key="1">
    <citation type="journal article" date="2001" name="Science">
        <title>Mechanisms of evolution in Rickettsia conorii and R. prowazekii.</title>
        <authorList>
            <person name="Ogata H."/>
            <person name="Audic S."/>
            <person name="Renesto-Audiffren P."/>
            <person name="Fournier P.-E."/>
            <person name="Barbe V."/>
            <person name="Samson D."/>
            <person name="Roux V."/>
            <person name="Cossart P."/>
            <person name="Weissenbach J."/>
            <person name="Claverie J.-M."/>
            <person name="Raoult D."/>
        </authorList>
    </citation>
    <scope>NUCLEOTIDE SEQUENCE [LARGE SCALE GENOMIC DNA]</scope>
    <source>
        <strain>ATCC VR-613 / Malish 7</strain>
    </source>
</reference>
<gene>
    <name evidence="1" type="primary">nusB</name>
    <name type="ordered locus">RC0204</name>
</gene>
<dbReference type="EMBL" id="AE006914">
    <property type="protein sequence ID" value="AAL02742.1"/>
    <property type="molecule type" value="Genomic_DNA"/>
</dbReference>
<dbReference type="PIR" id="D97725">
    <property type="entry name" value="D97725"/>
</dbReference>
<dbReference type="RefSeq" id="WP_010976871.1">
    <property type="nucleotide sequence ID" value="NC_003103.1"/>
</dbReference>
<dbReference type="SMR" id="Q92J65"/>
<dbReference type="GeneID" id="927986"/>
<dbReference type="KEGG" id="rco:RC0204"/>
<dbReference type="PATRIC" id="fig|272944.4.peg.234"/>
<dbReference type="HOGENOM" id="CLU_087843_4_3_5"/>
<dbReference type="Proteomes" id="UP000000816">
    <property type="component" value="Chromosome"/>
</dbReference>
<dbReference type="GO" id="GO:0005829">
    <property type="term" value="C:cytosol"/>
    <property type="evidence" value="ECO:0007669"/>
    <property type="project" value="TreeGrafter"/>
</dbReference>
<dbReference type="GO" id="GO:0003723">
    <property type="term" value="F:RNA binding"/>
    <property type="evidence" value="ECO:0007669"/>
    <property type="project" value="UniProtKB-UniRule"/>
</dbReference>
<dbReference type="GO" id="GO:0006353">
    <property type="term" value="P:DNA-templated transcription termination"/>
    <property type="evidence" value="ECO:0007669"/>
    <property type="project" value="UniProtKB-UniRule"/>
</dbReference>
<dbReference type="GO" id="GO:0031564">
    <property type="term" value="P:transcription antitermination"/>
    <property type="evidence" value="ECO:0007669"/>
    <property type="project" value="UniProtKB-KW"/>
</dbReference>
<dbReference type="CDD" id="cd00619">
    <property type="entry name" value="Terminator_NusB"/>
    <property type="match status" value="1"/>
</dbReference>
<dbReference type="Gene3D" id="1.10.940.10">
    <property type="entry name" value="NusB-like"/>
    <property type="match status" value="1"/>
</dbReference>
<dbReference type="HAMAP" id="MF_00073">
    <property type="entry name" value="NusB"/>
    <property type="match status" value="1"/>
</dbReference>
<dbReference type="InterPro" id="IPR035926">
    <property type="entry name" value="NusB-like_sf"/>
</dbReference>
<dbReference type="InterPro" id="IPR011605">
    <property type="entry name" value="NusB_fam"/>
</dbReference>
<dbReference type="InterPro" id="IPR006027">
    <property type="entry name" value="NusB_RsmB_TIM44"/>
</dbReference>
<dbReference type="NCBIfam" id="TIGR01951">
    <property type="entry name" value="nusB"/>
    <property type="match status" value="1"/>
</dbReference>
<dbReference type="PANTHER" id="PTHR11078:SF3">
    <property type="entry name" value="ANTITERMINATION NUSB DOMAIN-CONTAINING PROTEIN"/>
    <property type="match status" value="1"/>
</dbReference>
<dbReference type="PANTHER" id="PTHR11078">
    <property type="entry name" value="N UTILIZATION SUBSTANCE PROTEIN B-RELATED"/>
    <property type="match status" value="1"/>
</dbReference>
<dbReference type="Pfam" id="PF01029">
    <property type="entry name" value="NusB"/>
    <property type="match status" value="1"/>
</dbReference>
<dbReference type="SUPFAM" id="SSF48013">
    <property type="entry name" value="NusB-like"/>
    <property type="match status" value="1"/>
</dbReference>
<sequence>MSSNKINKKSIARIAAVQAIYQNILQNNDDMDDIMQNVLSFYQNNNAITDLPENLKISLSISHFKMLVKSVFENIHKLDEIIDNHLTNDKDPAHMPILLRALLRVSICELLFCPTTPAKVVINEYTDIANDMLNEHEIGFVNSVLDKIAKEHTRLI</sequence>
<protein>
    <recommendedName>
        <fullName evidence="1">Transcription antitermination protein NusB</fullName>
    </recommendedName>
    <alternativeName>
        <fullName evidence="1">Antitermination factor NusB</fullName>
    </alternativeName>
</protein>
<comment type="function">
    <text evidence="1">Involved in transcription antitermination. Required for transcription of ribosomal RNA (rRNA) genes. Binds specifically to the boxA antiterminator sequence of the ribosomal RNA (rrn) operons.</text>
</comment>
<comment type="similarity">
    <text evidence="1">Belongs to the NusB family.</text>
</comment>
<proteinExistence type="inferred from homology"/>